<gene>
    <name type="primary">galM</name>
    <name type="synonym">yoxA</name>
    <name type="ordered locus">BSU18360</name>
</gene>
<dbReference type="EC" id="5.1.3.3"/>
<dbReference type="EMBL" id="AL009126">
    <property type="protein sequence ID" value="CAB13719.1"/>
    <property type="molecule type" value="Genomic_DNA"/>
</dbReference>
<dbReference type="EMBL" id="Z34883">
    <property type="protein sequence ID" value="CAA84365.1"/>
    <property type="molecule type" value="Genomic_DNA"/>
</dbReference>
<dbReference type="PIR" id="A69930">
    <property type="entry name" value="A69930"/>
</dbReference>
<dbReference type="RefSeq" id="NP_389718.1">
    <property type="nucleotide sequence ID" value="NC_000964.3"/>
</dbReference>
<dbReference type="RefSeq" id="WP_004399304.1">
    <property type="nucleotide sequence ID" value="NZ_OZ025638.1"/>
</dbReference>
<dbReference type="PDB" id="3MWX">
    <property type="method" value="X-ray"/>
    <property type="resolution" value="1.45 A"/>
    <property type="chains" value="A/B=1-325"/>
</dbReference>
<dbReference type="PDB" id="4BZE">
    <property type="method" value="X-ray"/>
    <property type="resolution" value="2.00 A"/>
    <property type="chains" value="A/B=1-325"/>
</dbReference>
<dbReference type="PDB" id="4BZF">
    <property type="method" value="X-ray"/>
    <property type="resolution" value="1.90 A"/>
    <property type="chains" value="A/B=2-325"/>
</dbReference>
<dbReference type="PDB" id="4BZG">
    <property type="method" value="X-ray"/>
    <property type="resolution" value="2.13 A"/>
    <property type="chains" value="A/B=2-325"/>
</dbReference>
<dbReference type="PDB" id="4BZH">
    <property type="method" value="X-ray"/>
    <property type="resolution" value="2.60 A"/>
    <property type="chains" value="A/B=2-325"/>
</dbReference>
<dbReference type="PDBsum" id="3MWX"/>
<dbReference type="PDBsum" id="4BZE"/>
<dbReference type="PDBsum" id="4BZF"/>
<dbReference type="PDBsum" id="4BZG"/>
<dbReference type="PDBsum" id="4BZH"/>
<dbReference type="SMR" id="P39840"/>
<dbReference type="FunCoup" id="P39840">
    <property type="interactions" value="203"/>
</dbReference>
<dbReference type="STRING" id="224308.BSU18360"/>
<dbReference type="PaxDb" id="224308-BSU18360"/>
<dbReference type="DNASU" id="938046"/>
<dbReference type="EnsemblBacteria" id="CAB13719">
    <property type="protein sequence ID" value="CAB13719"/>
    <property type="gene ID" value="BSU_18360"/>
</dbReference>
<dbReference type="GeneID" id="938046"/>
<dbReference type="KEGG" id="bsu:BSU18360"/>
<dbReference type="PATRIC" id="fig|224308.179.peg.2003"/>
<dbReference type="eggNOG" id="COG2017">
    <property type="taxonomic scope" value="Bacteria"/>
</dbReference>
<dbReference type="InParanoid" id="P39840"/>
<dbReference type="OrthoDB" id="9795355at2"/>
<dbReference type="PhylomeDB" id="P39840"/>
<dbReference type="BioCyc" id="BSUB:BSU18360-MONOMER"/>
<dbReference type="UniPathway" id="UPA00242"/>
<dbReference type="EvolutionaryTrace" id="P39840"/>
<dbReference type="Proteomes" id="UP000001570">
    <property type="component" value="Chromosome"/>
</dbReference>
<dbReference type="GO" id="GO:0005737">
    <property type="term" value="C:cytoplasm"/>
    <property type="evidence" value="ECO:0000318"/>
    <property type="project" value="GO_Central"/>
</dbReference>
<dbReference type="GO" id="GO:0004034">
    <property type="term" value="F:aldose 1-epimerase activity"/>
    <property type="evidence" value="ECO:0000318"/>
    <property type="project" value="GO_Central"/>
</dbReference>
<dbReference type="GO" id="GO:0030246">
    <property type="term" value="F:carbohydrate binding"/>
    <property type="evidence" value="ECO:0007669"/>
    <property type="project" value="InterPro"/>
</dbReference>
<dbReference type="GO" id="GO:0033499">
    <property type="term" value="P:galactose catabolic process via UDP-galactose, Leloir pathway"/>
    <property type="evidence" value="ECO:0000318"/>
    <property type="project" value="GO_Central"/>
</dbReference>
<dbReference type="GO" id="GO:0006006">
    <property type="term" value="P:glucose metabolic process"/>
    <property type="evidence" value="ECO:0000318"/>
    <property type="project" value="GO_Central"/>
</dbReference>
<dbReference type="CDD" id="cd01081">
    <property type="entry name" value="Aldose_epim"/>
    <property type="match status" value="1"/>
</dbReference>
<dbReference type="FunFam" id="2.70.98.10:FF:000055">
    <property type="entry name" value="Aldose 1-epimerase"/>
    <property type="match status" value="1"/>
</dbReference>
<dbReference type="Gene3D" id="2.70.98.10">
    <property type="match status" value="1"/>
</dbReference>
<dbReference type="InterPro" id="IPR008183">
    <property type="entry name" value="Aldose_1/G6P_1-epimerase"/>
</dbReference>
<dbReference type="InterPro" id="IPR011013">
    <property type="entry name" value="Gal_mutarotase_sf_dom"/>
</dbReference>
<dbReference type="InterPro" id="IPR014718">
    <property type="entry name" value="GH-type_carb-bd"/>
</dbReference>
<dbReference type="PANTHER" id="PTHR10091">
    <property type="entry name" value="ALDOSE-1-EPIMERASE"/>
    <property type="match status" value="1"/>
</dbReference>
<dbReference type="PANTHER" id="PTHR10091:SF0">
    <property type="entry name" value="GALACTOSE MUTAROTASE"/>
    <property type="match status" value="1"/>
</dbReference>
<dbReference type="Pfam" id="PF01263">
    <property type="entry name" value="Aldose_epim"/>
    <property type="match status" value="1"/>
</dbReference>
<dbReference type="SUPFAM" id="SSF74650">
    <property type="entry name" value="Galactose mutarotase-like"/>
    <property type="match status" value="1"/>
</dbReference>
<proteinExistence type="evidence at protein level"/>
<keyword id="KW-0002">3D-structure</keyword>
<keyword id="KW-0119">Carbohydrate metabolism</keyword>
<keyword id="KW-0903">Direct protein sequencing</keyword>
<keyword id="KW-0413">Isomerase</keyword>
<keyword id="KW-1185">Reference proteome</keyword>
<accession>P39840</accession>
<feature type="initiator methionine" description="Removed" evidence="2">
    <location>
        <position position="1"/>
    </location>
</feature>
<feature type="chain" id="PRO_0000049666" description="Aldose 1-epimerase">
    <location>
        <begin position="2"/>
        <end position="325"/>
    </location>
</feature>
<feature type="active site" description="Proton donor" evidence="1">
    <location>
        <position position="177"/>
    </location>
</feature>
<feature type="active site" description="Proton acceptor" evidence="1">
    <location>
        <position position="283"/>
    </location>
</feature>
<feature type="binding site" evidence="1">
    <location>
        <begin position="73"/>
        <end position="74"/>
    </location>
    <ligand>
        <name>substrate</name>
    </ligand>
</feature>
<feature type="binding site" evidence="1">
    <location>
        <position position="230"/>
    </location>
    <ligand>
        <name>substrate</name>
    </ligand>
</feature>
<feature type="strand" evidence="4">
    <location>
        <begin position="3"/>
        <end position="10"/>
    </location>
</feature>
<feature type="strand" evidence="4">
    <location>
        <begin position="13"/>
        <end position="28"/>
    </location>
</feature>
<feature type="turn" evidence="4">
    <location>
        <begin position="29"/>
        <end position="33"/>
    </location>
</feature>
<feature type="strand" evidence="4">
    <location>
        <begin position="34"/>
        <end position="40"/>
    </location>
</feature>
<feature type="turn" evidence="4">
    <location>
        <begin position="41"/>
        <end position="44"/>
    </location>
</feature>
<feature type="helix" evidence="4">
    <location>
        <begin position="54"/>
        <end position="59"/>
    </location>
</feature>
<feature type="strand" evidence="4">
    <location>
        <begin position="63"/>
        <end position="65"/>
    </location>
</feature>
<feature type="strand" evidence="4">
    <location>
        <begin position="68"/>
        <end position="71"/>
    </location>
</feature>
<feature type="strand" evidence="4">
    <location>
        <begin position="73"/>
        <end position="76"/>
    </location>
</feature>
<feature type="strand" evidence="4">
    <location>
        <begin position="79"/>
        <end position="82"/>
    </location>
</feature>
<feature type="strand" evidence="4">
    <location>
        <begin position="85"/>
        <end position="88"/>
    </location>
</feature>
<feature type="turn" evidence="4">
    <location>
        <begin position="94"/>
        <end position="97"/>
    </location>
</feature>
<feature type="strand" evidence="4">
    <location>
        <begin position="98"/>
        <end position="103"/>
    </location>
</feature>
<feature type="strand" evidence="4">
    <location>
        <begin position="110"/>
        <end position="119"/>
    </location>
</feature>
<feature type="strand" evidence="4">
    <location>
        <begin position="121"/>
        <end position="128"/>
    </location>
</feature>
<feature type="helix" evidence="4">
    <location>
        <begin position="129"/>
        <end position="131"/>
    </location>
</feature>
<feature type="helix" evidence="4">
    <location>
        <begin position="133"/>
        <end position="138"/>
    </location>
</feature>
<feature type="strand" evidence="4">
    <location>
        <begin position="143"/>
        <end position="152"/>
    </location>
</feature>
<feature type="strand" evidence="4">
    <location>
        <begin position="155"/>
        <end position="164"/>
    </location>
</feature>
<feature type="strand" evidence="4">
    <location>
        <begin position="166"/>
        <end position="168"/>
    </location>
</feature>
<feature type="strand" evidence="4">
    <location>
        <begin position="170"/>
        <end position="172"/>
    </location>
</feature>
<feature type="turn" evidence="4">
    <location>
        <begin position="184"/>
        <end position="186"/>
    </location>
</feature>
<feature type="strand" evidence="4">
    <location>
        <begin position="187"/>
        <end position="199"/>
    </location>
</feature>
<feature type="strand" evidence="4">
    <location>
        <begin position="205"/>
        <end position="211"/>
    </location>
</feature>
<feature type="helix" evidence="4">
    <location>
        <begin position="215"/>
        <end position="220"/>
    </location>
</feature>
<feature type="strand" evidence="4">
    <location>
        <begin position="230"/>
        <end position="236"/>
    </location>
</feature>
<feature type="helix" evidence="4">
    <location>
        <begin position="237"/>
        <end position="240"/>
    </location>
</feature>
<feature type="strand" evidence="4">
    <location>
        <begin position="245"/>
        <end position="250"/>
    </location>
</feature>
<feature type="turn" evidence="4">
    <location>
        <begin position="251"/>
        <end position="254"/>
    </location>
</feature>
<feature type="strand" evidence="4">
    <location>
        <begin position="255"/>
        <end position="261"/>
    </location>
</feature>
<feature type="strand" evidence="4">
    <location>
        <begin position="267"/>
        <end position="271"/>
    </location>
</feature>
<feature type="strand" evidence="4">
    <location>
        <begin position="277"/>
        <end position="287"/>
    </location>
</feature>
<feature type="helix" evidence="4">
    <location>
        <begin position="291"/>
        <end position="293"/>
    </location>
</feature>
<feature type="helix" evidence="4">
    <location>
        <begin position="298"/>
        <end position="301"/>
    </location>
</feature>
<feature type="strand" evidence="4">
    <location>
        <begin position="304"/>
        <end position="306"/>
    </location>
</feature>
<feature type="strand" evidence="4">
    <location>
        <begin position="311"/>
        <end position="322"/>
    </location>
</feature>
<reference key="1">
    <citation type="journal article" date="2009" name="FEMS Microbiol. Lett.">
        <title>Characterization of the proteins encoded by the Bacillus subtilis yoxA-dacC operon.</title>
        <authorList>
            <person name="Duez C."/>
            <person name="Zervosen A."/>
            <person name="Teller N."/>
            <person name="Melkonian R."/>
            <person name="Banzubaze E."/>
            <person name="Bouillenne F."/>
            <person name="Luxen A."/>
            <person name="Frere J.-M."/>
        </authorList>
    </citation>
    <scope>NUCLEOTIDE SEQUENCE [GENOMIC DNA]</scope>
    <scope>PROTEIN SEQUENCE OF 2-5</scope>
    <scope>CATALYTIC ACTIVITY</scope>
    <scope>INDUCTION</scope>
    <scope>DEVELOPMENTAL STAGE</scope>
    <source>
        <strain>168</strain>
    </source>
</reference>
<reference key="2">
    <citation type="journal article" date="1997" name="Nature">
        <title>The complete genome sequence of the Gram-positive bacterium Bacillus subtilis.</title>
        <authorList>
            <person name="Kunst F."/>
            <person name="Ogasawara N."/>
            <person name="Moszer I."/>
            <person name="Albertini A.M."/>
            <person name="Alloni G."/>
            <person name="Azevedo V."/>
            <person name="Bertero M.G."/>
            <person name="Bessieres P."/>
            <person name="Bolotin A."/>
            <person name="Borchert S."/>
            <person name="Borriss R."/>
            <person name="Boursier L."/>
            <person name="Brans A."/>
            <person name="Braun M."/>
            <person name="Brignell S.C."/>
            <person name="Bron S."/>
            <person name="Brouillet S."/>
            <person name="Bruschi C.V."/>
            <person name="Caldwell B."/>
            <person name="Capuano V."/>
            <person name="Carter N.M."/>
            <person name="Choi S.-K."/>
            <person name="Codani J.-J."/>
            <person name="Connerton I.F."/>
            <person name="Cummings N.J."/>
            <person name="Daniel R.A."/>
            <person name="Denizot F."/>
            <person name="Devine K.M."/>
            <person name="Duesterhoeft A."/>
            <person name="Ehrlich S.D."/>
            <person name="Emmerson P.T."/>
            <person name="Entian K.-D."/>
            <person name="Errington J."/>
            <person name="Fabret C."/>
            <person name="Ferrari E."/>
            <person name="Foulger D."/>
            <person name="Fritz C."/>
            <person name="Fujita M."/>
            <person name="Fujita Y."/>
            <person name="Fuma S."/>
            <person name="Galizzi A."/>
            <person name="Galleron N."/>
            <person name="Ghim S.-Y."/>
            <person name="Glaser P."/>
            <person name="Goffeau A."/>
            <person name="Golightly E.J."/>
            <person name="Grandi G."/>
            <person name="Guiseppi G."/>
            <person name="Guy B.J."/>
            <person name="Haga K."/>
            <person name="Haiech J."/>
            <person name="Harwood C.R."/>
            <person name="Henaut A."/>
            <person name="Hilbert H."/>
            <person name="Holsappel S."/>
            <person name="Hosono S."/>
            <person name="Hullo M.-F."/>
            <person name="Itaya M."/>
            <person name="Jones L.-M."/>
            <person name="Joris B."/>
            <person name="Karamata D."/>
            <person name="Kasahara Y."/>
            <person name="Klaerr-Blanchard M."/>
            <person name="Klein C."/>
            <person name="Kobayashi Y."/>
            <person name="Koetter P."/>
            <person name="Koningstein G."/>
            <person name="Krogh S."/>
            <person name="Kumano M."/>
            <person name="Kurita K."/>
            <person name="Lapidus A."/>
            <person name="Lardinois S."/>
            <person name="Lauber J."/>
            <person name="Lazarevic V."/>
            <person name="Lee S.-M."/>
            <person name="Levine A."/>
            <person name="Liu H."/>
            <person name="Masuda S."/>
            <person name="Mauel C."/>
            <person name="Medigue C."/>
            <person name="Medina N."/>
            <person name="Mellado R.P."/>
            <person name="Mizuno M."/>
            <person name="Moestl D."/>
            <person name="Nakai S."/>
            <person name="Noback M."/>
            <person name="Noone D."/>
            <person name="O'Reilly M."/>
            <person name="Ogawa K."/>
            <person name="Ogiwara A."/>
            <person name="Oudega B."/>
            <person name="Park S.-H."/>
            <person name="Parro V."/>
            <person name="Pohl T.M."/>
            <person name="Portetelle D."/>
            <person name="Porwollik S."/>
            <person name="Prescott A.M."/>
            <person name="Presecan E."/>
            <person name="Pujic P."/>
            <person name="Purnelle B."/>
            <person name="Rapoport G."/>
            <person name="Rey M."/>
            <person name="Reynolds S."/>
            <person name="Rieger M."/>
            <person name="Rivolta C."/>
            <person name="Rocha E."/>
            <person name="Roche B."/>
            <person name="Rose M."/>
            <person name="Sadaie Y."/>
            <person name="Sato T."/>
            <person name="Scanlan E."/>
            <person name="Schleich S."/>
            <person name="Schroeter R."/>
            <person name="Scoffone F."/>
            <person name="Sekiguchi J."/>
            <person name="Sekowska A."/>
            <person name="Seror S.J."/>
            <person name="Serror P."/>
            <person name="Shin B.-S."/>
            <person name="Soldo B."/>
            <person name="Sorokin A."/>
            <person name="Tacconi E."/>
            <person name="Takagi T."/>
            <person name="Takahashi H."/>
            <person name="Takemaru K."/>
            <person name="Takeuchi M."/>
            <person name="Tamakoshi A."/>
            <person name="Tanaka T."/>
            <person name="Terpstra P."/>
            <person name="Tognoni A."/>
            <person name="Tosato V."/>
            <person name="Uchiyama S."/>
            <person name="Vandenbol M."/>
            <person name="Vannier F."/>
            <person name="Vassarotti A."/>
            <person name="Viari A."/>
            <person name="Wambutt R."/>
            <person name="Wedler E."/>
            <person name="Wedler H."/>
            <person name="Weitzenegger T."/>
            <person name="Winters P."/>
            <person name="Wipat A."/>
            <person name="Yamamoto H."/>
            <person name="Yamane K."/>
            <person name="Yasumoto K."/>
            <person name="Yata K."/>
            <person name="Yoshida K."/>
            <person name="Yoshikawa H.-F."/>
            <person name="Zumstein E."/>
            <person name="Yoshikawa H."/>
            <person name="Danchin A."/>
        </authorList>
    </citation>
    <scope>NUCLEOTIDE SEQUENCE [LARGE SCALE GENOMIC DNA]</scope>
    <source>
        <strain>168</strain>
    </source>
</reference>
<reference key="3">
    <citation type="journal article" date="1995" name="Microbiology">
        <title>A putative new peptide synthase operon in Bacillus subtilis: partial characterization.</title>
        <authorList>
            <person name="Tognoni A."/>
            <person name="Franchi E."/>
            <person name="Magistrelli C."/>
            <person name="Colombo E."/>
            <person name="Cosmina P."/>
            <person name="Grandi G."/>
        </authorList>
    </citation>
    <scope>NUCLEOTIDE SEQUENCE [GENOMIC DNA] OF 284-325</scope>
    <source>
        <strain>168</strain>
    </source>
</reference>
<evidence type="ECO:0000250" key="1"/>
<evidence type="ECO:0000269" key="2">
    <source>
    </source>
</evidence>
<evidence type="ECO:0000305" key="3"/>
<evidence type="ECO:0007829" key="4">
    <source>
        <dbReference type="PDB" id="3MWX"/>
    </source>
</evidence>
<name>GALM_BACSU</name>
<protein>
    <recommendedName>
        <fullName>Aldose 1-epimerase</fullName>
        <ecNumber>5.1.3.3</ecNumber>
    </recommendedName>
    <alternativeName>
        <fullName>Galactose mutarotase</fullName>
    </alternativeName>
</protein>
<sequence>MANFIEKITYLGTPAIKAGNEHLEMIVVPEWGSNVISLVDKTTNVQLLREPETAESFHDTPTLYGIPILFPPNRISDGTFSFRGRTYHFDINEKDKHNHLHGFLYHEKWNVVTTKQTDEGVIVETEIDLSELPHVQKQFPHHAVVRMTYTIKENTLFKHATVMNKGKEAFPWGIGYHTTFIFPAESSLFSLTADQQWELDERLLPTGKLMDVPYKEALHEGMDLRHKQLDDVFLSSYQKRGGENQAVIYHQHAHISIIYKADEQFKHWVVYNADGKQGYLCPEPYTWVTNAVNLDLPSSLTGLQVLEPGEETTAKSSITIELNHQ</sequence>
<comment type="catalytic activity">
    <reaction evidence="2">
        <text>alpha-D-glucose = beta-D-glucose</text>
        <dbReference type="Rhea" id="RHEA:10264"/>
        <dbReference type="ChEBI" id="CHEBI:15903"/>
        <dbReference type="ChEBI" id="CHEBI:17925"/>
        <dbReference type="EC" id="5.1.3.3"/>
    </reaction>
</comment>
<comment type="pathway">
    <text>Carbohydrate metabolism; hexose metabolism.</text>
</comment>
<comment type="developmental stage">
    <text evidence="2">Expressed at the end of the exponential growth phase.</text>
</comment>
<comment type="induction">
    <text evidence="2">By nitrogen or tryptophan starvation.</text>
</comment>
<comment type="similarity">
    <text evidence="3">Belongs to the aldose epimerase family.</text>
</comment>
<organism>
    <name type="scientific">Bacillus subtilis (strain 168)</name>
    <dbReference type="NCBI Taxonomy" id="224308"/>
    <lineage>
        <taxon>Bacteria</taxon>
        <taxon>Bacillati</taxon>
        <taxon>Bacillota</taxon>
        <taxon>Bacilli</taxon>
        <taxon>Bacillales</taxon>
        <taxon>Bacillaceae</taxon>
        <taxon>Bacillus</taxon>
    </lineage>
</organism>